<protein>
    <recommendedName>
        <fullName evidence="1">Large ribosomal subunit protein bL32</fullName>
    </recommendedName>
    <alternativeName>
        <fullName evidence="3">50S ribosomal protein L32</fullName>
    </alternativeName>
</protein>
<name>RL32_HISS2</name>
<dbReference type="EMBL" id="CP000947">
    <property type="protein sequence ID" value="ACA31932.1"/>
    <property type="molecule type" value="Genomic_DNA"/>
</dbReference>
<dbReference type="RefSeq" id="WP_011608316.1">
    <property type="nucleotide sequence ID" value="NC_010519.1"/>
</dbReference>
<dbReference type="SMR" id="B0UUY8"/>
<dbReference type="STRING" id="228400.HSM_0030"/>
<dbReference type="GeneID" id="31486305"/>
<dbReference type="KEGG" id="hsm:HSM_0030"/>
<dbReference type="HOGENOM" id="CLU_129084_2_1_6"/>
<dbReference type="GO" id="GO:0015934">
    <property type="term" value="C:large ribosomal subunit"/>
    <property type="evidence" value="ECO:0007669"/>
    <property type="project" value="InterPro"/>
</dbReference>
<dbReference type="GO" id="GO:0003735">
    <property type="term" value="F:structural constituent of ribosome"/>
    <property type="evidence" value="ECO:0007669"/>
    <property type="project" value="InterPro"/>
</dbReference>
<dbReference type="GO" id="GO:0006412">
    <property type="term" value="P:translation"/>
    <property type="evidence" value="ECO:0007669"/>
    <property type="project" value="UniProtKB-UniRule"/>
</dbReference>
<dbReference type="Gene3D" id="1.20.5.640">
    <property type="entry name" value="Single helix bin"/>
    <property type="match status" value="1"/>
</dbReference>
<dbReference type="HAMAP" id="MF_00340">
    <property type="entry name" value="Ribosomal_bL32"/>
    <property type="match status" value="1"/>
</dbReference>
<dbReference type="InterPro" id="IPR002677">
    <property type="entry name" value="Ribosomal_bL32"/>
</dbReference>
<dbReference type="InterPro" id="IPR044957">
    <property type="entry name" value="Ribosomal_bL32_bact"/>
</dbReference>
<dbReference type="InterPro" id="IPR011332">
    <property type="entry name" value="Ribosomal_zn-bd"/>
</dbReference>
<dbReference type="NCBIfam" id="TIGR01031">
    <property type="entry name" value="rpmF_bact"/>
    <property type="match status" value="1"/>
</dbReference>
<dbReference type="PANTHER" id="PTHR35534">
    <property type="entry name" value="50S RIBOSOMAL PROTEIN L32"/>
    <property type="match status" value="1"/>
</dbReference>
<dbReference type="PANTHER" id="PTHR35534:SF1">
    <property type="entry name" value="LARGE RIBOSOMAL SUBUNIT PROTEIN BL32"/>
    <property type="match status" value="1"/>
</dbReference>
<dbReference type="Pfam" id="PF01783">
    <property type="entry name" value="Ribosomal_L32p"/>
    <property type="match status" value="1"/>
</dbReference>
<dbReference type="SUPFAM" id="SSF57829">
    <property type="entry name" value="Zn-binding ribosomal proteins"/>
    <property type="match status" value="1"/>
</dbReference>
<sequence>MAVQQNKKSRSRRDMRRSHDALTTAAVSVDKTSGETHLRHHVTADGYYRGRKVINK</sequence>
<evidence type="ECO:0000255" key="1">
    <source>
        <dbReference type="HAMAP-Rule" id="MF_00340"/>
    </source>
</evidence>
<evidence type="ECO:0000256" key="2">
    <source>
        <dbReference type="SAM" id="MobiDB-lite"/>
    </source>
</evidence>
<evidence type="ECO:0000305" key="3"/>
<keyword id="KW-0687">Ribonucleoprotein</keyword>
<keyword id="KW-0689">Ribosomal protein</keyword>
<feature type="chain" id="PRO_1000079331" description="Large ribosomal subunit protein bL32">
    <location>
        <begin position="1"/>
        <end position="56"/>
    </location>
</feature>
<feature type="region of interest" description="Disordered" evidence="2">
    <location>
        <begin position="1"/>
        <end position="38"/>
    </location>
</feature>
<feature type="compositionally biased region" description="Basic residues" evidence="2">
    <location>
        <begin position="7"/>
        <end position="16"/>
    </location>
</feature>
<reference key="1">
    <citation type="submission" date="2008-02" db="EMBL/GenBank/DDBJ databases">
        <title>Complete sequence of Haemophilus somnus 2336.</title>
        <authorList>
            <consortium name="US DOE Joint Genome Institute"/>
            <person name="Siddaramappa S."/>
            <person name="Duncan A.J."/>
            <person name="Challacombe J.F."/>
            <person name="Rainey D."/>
            <person name="Gillaspy A.F."/>
            <person name="Carson M."/>
            <person name="Gipson J."/>
            <person name="Gipson M."/>
            <person name="Bruce D."/>
            <person name="Detter J.C."/>
            <person name="Han C.S."/>
            <person name="Land M."/>
            <person name="Tapia R."/>
            <person name="Thompson L.S."/>
            <person name="Orvis J."/>
            <person name="Zaitshik J."/>
            <person name="Barnes G."/>
            <person name="Brettin T.S."/>
            <person name="Dyer D.W."/>
            <person name="Inzana T.J."/>
        </authorList>
    </citation>
    <scope>NUCLEOTIDE SEQUENCE [LARGE SCALE GENOMIC DNA]</scope>
    <source>
        <strain>2336</strain>
    </source>
</reference>
<comment type="similarity">
    <text evidence="1">Belongs to the bacterial ribosomal protein bL32 family.</text>
</comment>
<organism>
    <name type="scientific">Histophilus somni (strain 2336)</name>
    <name type="common">Haemophilus somnus</name>
    <dbReference type="NCBI Taxonomy" id="228400"/>
    <lineage>
        <taxon>Bacteria</taxon>
        <taxon>Pseudomonadati</taxon>
        <taxon>Pseudomonadota</taxon>
        <taxon>Gammaproteobacteria</taxon>
        <taxon>Pasteurellales</taxon>
        <taxon>Pasteurellaceae</taxon>
        <taxon>Histophilus</taxon>
    </lineage>
</organism>
<gene>
    <name evidence="1" type="primary">rpmF</name>
    <name type="ordered locus">HSM_0030</name>
</gene>
<proteinExistence type="inferred from homology"/>
<accession>B0UUY8</accession>